<name>TAM_YERPA</name>
<evidence type="ECO:0000255" key="1">
    <source>
        <dbReference type="HAMAP-Rule" id="MF_00560"/>
    </source>
</evidence>
<sequence length="258" mass="29353">MQDWDPDLYRQFEAERTRPATDLLAHITITSPQFISDLGCGPGNSTELLHRRFPDAQLVGIDHSQAMLASAQQRLPHCTFIEADIHQWRPSQPQNLIYANASLQWLTDHPHLFPSLLSQLAPRGVLAVQMPDNLDQPSHRAMREVAENGPWQQTLQEAGATRAKVLSANHYYDLLAPHAERVDIWRTTYYHPMPSAQAIVDWLRATGLRPYLAPLTEAMQLAFLQNYLAIIDKAYPARTDGRRLLAFPRLFIVAHAQR</sequence>
<reference key="1">
    <citation type="journal article" date="2006" name="J. Bacteriol.">
        <title>Complete genome sequence of Yersinia pestis strains Antiqua and Nepal516: evidence of gene reduction in an emerging pathogen.</title>
        <authorList>
            <person name="Chain P.S.G."/>
            <person name="Hu P."/>
            <person name="Malfatti S.A."/>
            <person name="Radnedge L."/>
            <person name="Larimer F."/>
            <person name="Vergez L.M."/>
            <person name="Worsham P."/>
            <person name="Chu M.C."/>
            <person name="Andersen G.L."/>
        </authorList>
    </citation>
    <scope>NUCLEOTIDE SEQUENCE [LARGE SCALE GENOMIC DNA]</scope>
    <source>
        <strain>Antiqua</strain>
    </source>
</reference>
<comment type="function">
    <text evidence="1">Catalyzes the S-adenosylmethionine monomethyl esterification of trans-aconitate.</text>
</comment>
<comment type="catalytic activity">
    <reaction evidence="1">
        <text>trans-aconitate + S-adenosyl-L-methionine = (E)-3-(methoxycarbonyl)pent-2-enedioate + S-adenosyl-L-homocysteine</text>
        <dbReference type="Rhea" id="RHEA:14969"/>
        <dbReference type="ChEBI" id="CHEBI:15708"/>
        <dbReference type="ChEBI" id="CHEBI:57470"/>
        <dbReference type="ChEBI" id="CHEBI:57856"/>
        <dbReference type="ChEBI" id="CHEBI:59789"/>
        <dbReference type="EC" id="2.1.1.144"/>
    </reaction>
</comment>
<comment type="subcellular location">
    <subcellularLocation>
        <location evidence="1">Cytoplasm</location>
    </subcellularLocation>
</comment>
<comment type="similarity">
    <text evidence="1">Belongs to the methyltransferase superfamily. Tam family.</text>
</comment>
<gene>
    <name evidence="1" type="primary">tam</name>
    <name type="ordered locus">YPA_2001</name>
</gene>
<keyword id="KW-0963">Cytoplasm</keyword>
<keyword id="KW-0489">Methyltransferase</keyword>
<keyword id="KW-0949">S-adenosyl-L-methionine</keyword>
<keyword id="KW-0808">Transferase</keyword>
<feature type="chain" id="PRO_1000056586" description="Trans-aconitate 2-methyltransferase">
    <location>
        <begin position="1"/>
        <end position="258"/>
    </location>
</feature>
<proteinExistence type="inferred from homology"/>
<protein>
    <recommendedName>
        <fullName evidence="1">Trans-aconitate 2-methyltransferase</fullName>
        <ecNumber evidence="1">2.1.1.144</ecNumber>
    </recommendedName>
</protein>
<dbReference type="EC" id="2.1.1.144" evidence="1"/>
<dbReference type="EMBL" id="CP000308">
    <property type="protein sequence ID" value="ABG13967.1"/>
    <property type="molecule type" value="Genomic_DNA"/>
</dbReference>
<dbReference type="RefSeq" id="WP_002210232.1">
    <property type="nucleotide sequence ID" value="NZ_CP009906.1"/>
</dbReference>
<dbReference type="SMR" id="Q1C6F5"/>
<dbReference type="GeneID" id="57976176"/>
<dbReference type="KEGG" id="ypa:YPA_2001"/>
<dbReference type="Proteomes" id="UP000001971">
    <property type="component" value="Chromosome"/>
</dbReference>
<dbReference type="GO" id="GO:0005737">
    <property type="term" value="C:cytoplasm"/>
    <property type="evidence" value="ECO:0007669"/>
    <property type="project" value="UniProtKB-SubCell"/>
</dbReference>
<dbReference type="GO" id="GO:0030798">
    <property type="term" value="F:trans-aconitate 2-methyltransferase activity"/>
    <property type="evidence" value="ECO:0007669"/>
    <property type="project" value="UniProtKB-UniRule"/>
</dbReference>
<dbReference type="GO" id="GO:0032259">
    <property type="term" value="P:methylation"/>
    <property type="evidence" value="ECO:0007669"/>
    <property type="project" value="UniProtKB-KW"/>
</dbReference>
<dbReference type="CDD" id="cd02440">
    <property type="entry name" value="AdoMet_MTases"/>
    <property type="match status" value="1"/>
</dbReference>
<dbReference type="Gene3D" id="1.10.150.290">
    <property type="entry name" value="S-adenosyl-L-methionine-dependent methyltransferases"/>
    <property type="match status" value="1"/>
</dbReference>
<dbReference type="Gene3D" id="3.40.50.150">
    <property type="entry name" value="Vaccinia Virus protein VP39"/>
    <property type="match status" value="1"/>
</dbReference>
<dbReference type="HAMAP" id="MF_00560">
    <property type="entry name" value="Tran_acon_Me_trans"/>
    <property type="match status" value="1"/>
</dbReference>
<dbReference type="InterPro" id="IPR041698">
    <property type="entry name" value="Methyltransf_25"/>
</dbReference>
<dbReference type="InterPro" id="IPR029063">
    <property type="entry name" value="SAM-dependent_MTases_sf"/>
</dbReference>
<dbReference type="InterPro" id="IPR023506">
    <property type="entry name" value="Trans-aconitate_MeTrfase"/>
</dbReference>
<dbReference type="InterPro" id="IPR023149">
    <property type="entry name" value="Trans_acon_MeTrfase_C"/>
</dbReference>
<dbReference type="NCBIfam" id="NF002463">
    <property type="entry name" value="PRK01683.1"/>
    <property type="match status" value="1"/>
</dbReference>
<dbReference type="PANTHER" id="PTHR43861:SF1">
    <property type="entry name" value="TRANS-ACONITATE 2-METHYLTRANSFERASE"/>
    <property type="match status" value="1"/>
</dbReference>
<dbReference type="PANTHER" id="PTHR43861">
    <property type="entry name" value="TRANS-ACONITATE 2-METHYLTRANSFERASE-RELATED"/>
    <property type="match status" value="1"/>
</dbReference>
<dbReference type="Pfam" id="PF13649">
    <property type="entry name" value="Methyltransf_25"/>
    <property type="match status" value="1"/>
</dbReference>
<dbReference type="SUPFAM" id="SSF53335">
    <property type="entry name" value="S-adenosyl-L-methionine-dependent methyltransferases"/>
    <property type="match status" value="1"/>
</dbReference>
<accession>Q1C6F5</accession>
<organism>
    <name type="scientific">Yersinia pestis bv. Antiqua (strain Antiqua)</name>
    <dbReference type="NCBI Taxonomy" id="360102"/>
    <lineage>
        <taxon>Bacteria</taxon>
        <taxon>Pseudomonadati</taxon>
        <taxon>Pseudomonadota</taxon>
        <taxon>Gammaproteobacteria</taxon>
        <taxon>Enterobacterales</taxon>
        <taxon>Yersiniaceae</taxon>
        <taxon>Yersinia</taxon>
    </lineage>
</organism>